<accession>Q6F0P3</accession>
<dbReference type="EC" id="7.3.2.2" evidence="1"/>
<dbReference type="EMBL" id="AE017263">
    <property type="protein sequence ID" value="AAT75930.1"/>
    <property type="molecule type" value="Genomic_DNA"/>
</dbReference>
<dbReference type="RefSeq" id="WP_011183470.1">
    <property type="nucleotide sequence ID" value="NC_006055.1"/>
</dbReference>
<dbReference type="RefSeq" id="YP_053814.1">
    <property type="nucleotide sequence ID" value="NC_006055.1"/>
</dbReference>
<dbReference type="SMR" id="Q6F0P3"/>
<dbReference type="STRING" id="265311.Mfl572"/>
<dbReference type="PaxDb" id="265311-Mfl572"/>
<dbReference type="EnsemblBacteria" id="AAT75930">
    <property type="protein sequence ID" value="AAT75930"/>
    <property type="gene ID" value="Mfl572"/>
</dbReference>
<dbReference type="GeneID" id="2898016"/>
<dbReference type="KEGG" id="mfl:Mfl572"/>
<dbReference type="PATRIC" id="fig|265311.5.peg.576"/>
<dbReference type="eggNOG" id="COG3638">
    <property type="taxonomic scope" value="Bacteria"/>
</dbReference>
<dbReference type="HOGENOM" id="CLU_000604_1_22_14"/>
<dbReference type="OrthoDB" id="389713at2"/>
<dbReference type="Proteomes" id="UP000006647">
    <property type="component" value="Chromosome"/>
</dbReference>
<dbReference type="GO" id="GO:0005886">
    <property type="term" value="C:plasma membrane"/>
    <property type="evidence" value="ECO:0007669"/>
    <property type="project" value="UniProtKB-SubCell"/>
</dbReference>
<dbReference type="GO" id="GO:0015416">
    <property type="term" value="F:ABC-type phosphonate transporter activity"/>
    <property type="evidence" value="ECO:0007669"/>
    <property type="project" value="UniProtKB-EC"/>
</dbReference>
<dbReference type="GO" id="GO:0005524">
    <property type="term" value="F:ATP binding"/>
    <property type="evidence" value="ECO:0007669"/>
    <property type="project" value="UniProtKB-KW"/>
</dbReference>
<dbReference type="GO" id="GO:0016887">
    <property type="term" value="F:ATP hydrolysis activity"/>
    <property type="evidence" value="ECO:0007669"/>
    <property type="project" value="InterPro"/>
</dbReference>
<dbReference type="CDD" id="cd03256">
    <property type="entry name" value="ABC_PhnC_transporter"/>
    <property type="match status" value="1"/>
</dbReference>
<dbReference type="Gene3D" id="3.40.50.300">
    <property type="entry name" value="P-loop containing nucleotide triphosphate hydrolases"/>
    <property type="match status" value="1"/>
</dbReference>
<dbReference type="InterPro" id="IPR003593">
    <property type="entry name" value="AAA+_ATPase"/>
</dbReference>
<dbReference type="InterPro" id="IPR003439">
    <property type="entry name" value="ABC_transporter-like_ATP-bd"/>
</dbReference>
<dbReference type="InterPro" id="IPR017871">
    <property type="entry name" value="ABC_transporter-like_CS"/>
</dbReference>
<dbReference type="InterPro" id="IPR012693">
    <property type="entry name" value="ABC_transpr_PhnC"/>
</dbReference>
<dbReference type="InterPro" id="IPR050086">
    <property type="entry name" value="MetN_ABC_transporter-like"/>
</dbReference>
<dbReference type="InterPro" id="IPR027417">
    <property type="entry name" value="P-loop_NTPase"/>
</dbReference>
<dbReference type="NCBIfam" id="TIGR02315">
    <property type="entry name" value="ABC_phnC"/>
    <property type="match status" value="1"/>
</dbReference>
<dbReference type="PANTHER" id="PTHR43166">
    <property type="entry name" value="AMINO ACID IMPORT ATP-BINDING PROTEIN"/>
    <property type="match status" value="1"/>
</dbReference>
<dbReference type="PANTHER" id="PTHR43166:SF6">
    <property type="entry name" value="PHOSPHONATES IMPORT ATP-BINDING PROTEIN PHNC"/>
    <property type="match status" value="1"/>
</dbReference>
<dbReference type="Pfam" id="PF00005">
    <property type="entry name" value="ABC_tran"/>
    <property type="match status" value="1"/>
</dbReference>
<dbReference type="SMART" id="SM00382">
    <property type="entry name" value="AAA"/>
    <property type="match status" value="1"/>
</dbReference>
<dbReference type="SUPFAM" id="SSF52540">
    <property type="entry name" value="P-loop containing nucleoside triphosphate hydrolases"/>
    <property type="match status" value="1"/>
</dbReference>
<dbReference type="PROSITE" id="PS00211">
    <property type="entry name" value="ABC_TRANSPORTER_1"/>
    <property type="match status" value="1"/>
</dbReference>
<dbReference type="PROSITE" id="PS50893">
    <property type="entry name" value="ABC_TRANSPORTER_2"/>
    <property type="match status" value="1"/>
</dbReference>
<dbReference type="PROSITE" id="PS51249">
    <property type="entry name" value="PHNC"/>
    <property type="match status" value="1"/>
</dbReference>
<protein>
    <recommendedName>
        <fullName evidence="1">Phosphonates import ATP-binding protein PhnC</fullName>
        <ecNumber evidence="1">7.3.2.2</ecNumber>
    </recommendedName>
</protein>
<gene>
    <name evidence="1" type="primary">phnC</name>
    <name type="ordered locus">Mfl572</name>
</gene>
<organism>
    <name type="scientific">Mesoplasma florum (strain ATCC 33453 / NBRC 100688 / NCTC 11704 / L1)</name>
    <name type="common">Acholeplasma florum</name>
    <dbReference type="NCBI Taxonomy" id="265311"/>
    <lineage>
        <taxon>Bacteria</taxon>
        <taxon>Bacillati</taxon>
        <taxon>Mycoplasmatota</taxon>
        <taxon>Mollicutes</taxon>
        <taxon>Entomoplasmatales</taxon>
        <taxon>Entomoplasmataceae</taxon>
        <taxon>Mesoplasma</taxon>
    </lineage>
</organism>
<feature type="chain" id="PRO_0000092713" description="Phosphonates import ATP-binding protein PhnC">
    <location>
        <begin position="1"/>
        <end position="249"/>
    </location>
</feature>
<feature type="domain" description="ABC transporter" evidence="1">
    <location>
        <begin position="2"/>
        <end position="246"/>
    </location>
</feature>
<feature type="binding site" evidence="1">
    <location>
        <begin position="35"/>
        <end position="42"/>
    </location>
    <ligand>
        <name>ATP</name>
        <dbReference type="ChEBI" id="CHEBI:30616"/>
    </ligand>
</feature>
<reference key="1">
    <citation type="submission" date="2004-06" db="EMBL/GenBank/DDBJ databases">
        <authorList>
            <person name="Birren B.W."/>
            <person name="Stange-Thomann N."/>
            <person name="Hafez N."/>
            <person name="DeCaprio D."/>
            <person name="Fisher S."/>
            <person name="Butler J."/>
            <person name="Elkins T."/>
            <person name="Kodira C.D."/>
            <person name="Major J."/>
            <person name="Wang S."/>
            <person name="Nicol R."/>
            <person name="Nusbaum C."/>
        </authorList>
    </citation>
    <scope>NUCLEOTIDE SEQUENCE [LARGE SCALE GENOMIC DNA]</scope>
    <source>
        <strain>ATCC 33453 / NBRC 100688 / NCTC 11704 / L1</strain>
    </source>
</reference>
<name>PHNC_MESFL</name>
<keyword id="KW-0067">ATP-binding</keyword>
<keyword id="KW-1003">Cell membrane</keyword>
<keyword id="KW-0472">Membrane</keyword>
<keyword id="KW-0547">Nucleotide-binding</keyword>
<keyword id="KW-0918">Phosphonate transport</keyword>
<keyword id="KW-1185">Reference proteome</keyword>
<keyword id="KW-1278">Translocase</keyword>
<keyword id="KW-0813">Transport</keyword>
<proteinExistence type="inferred from homology"/>
<comment type="function">
    <text evidence="1">Part of the ABC transporter complex PhnCDE involved in phosphonates import. Responsible for energy coupling to the transport system.</text>
</comment>
<comment type="catalytic activity">
    <reaction evidence="1">
        <text>phosphonate(out) + ATP + H2O = phosphonate(in) + ADP + phosphate + H(+)</text>
        <dbReference type="Rhea" id="RHEA:18065"/>
        <dbReference type="ChEBI" id="CHEBI:15377"/>
        <dbReference type="ChEBI" id="CHEBI:15378"/>
        <dbReference type="ChEBI" id="CHEBI:16215"/>
        <dbReference type="ChEBI" id="CHEBI:30616"/>
        <dbReference type="ChEBI" id="CHEBI:43474"/>
        <dbReference type="ChEBI" id="CHEBI:456216"/>
        <dbReference type="EC" id="7.3.2.2"/>
    </reaction>
</comment>
<comment type="subunit">
    <text evidence="1">The complex is composed of two ATP-binding proteins (PhnC), two transmembrane proteins (PhnE) and a solute-binding protein (PhnD).</text>
</comment>
<comment type="subcellular location">
    <subcellularLocation>
        <location evidence="1">Cell membrane</location>
        <topology evidence="1">Peripheral membrane protein</topology>
    </subcellularLocation>
</comment>
<comment type="similarity">
    <text evidence="1">Belongs to the ABC transporter superfamily. Phosphonates importer (TC 3.A.1.9.1) family.</text>
</comment>
<evidence type="ECO:0000255" key="1">
    <source>
        <dbReference type="HAMAP-Rule" id="MF_01713"/>
    </source>
</evidence>
<sequence length="249" mass="28151">MIEFKKVEKVWPNGKHVLKDINLKINAGEFVAVIGLSGAGKTTLLKTINKINNISSGEIFIDINENEKYEINKTKGKSLRNLRKHIGLMSQEYNNIEKQTVLKNVLNSRVAQMNFFRAMAGFFTKEEKQNALAALEKLNLLEFSYIRADNLSGGQQQRVALARTINQNPKIIIADEPVSALDPILANRVMEDFKKINSELNITVIINIHHVDLALKYCDRIIGLKDGEIVFDGDPKKLNESKLEEIYGK</sequence>